<name>SCX40_TITSE</name>
<evidence type="ECO:0000255" key="1"/>
<evidence type="ECO:0000255" key="2">
    <source>
        <dbReference type="PROSITE-ProRule" id="PRU01210"/>
    </source>
</evidence>
<evidence type="ECO:0000303" key="3">
    <source>
    </source>
</evidence>
<evidence type="ECO:0000305" key="4"/>
<evidence type="ECO:0000305" key="5">
    <source>
    </source>
</evidence>
<evidence type="ECO:0000312" key="6">
    <source>
        <dbReference type="EMBL" id="QPD99031.1"/>
    </source>
</evidence>
<protein>
    <recommendedName>
        <fullName evidence="3">Putative sodium channel toxin Ts40</fullName>
    </recommendedName>
    <alternativeName>
        <fullName evidence="4">Tityustoxin-40</fullName>
    </alternativeName>
</protein>
<sequence length="87" mass="10350">MTALFYLLFLTSVIIETHQECDMEKLDGDFPRQNNGYLYVCKDVETCFHICEERDLNRNHAKCCYENCFCEHLHGEKIRKQNVSLKI</sequence>
<comment type="function">
    <text evidence="5">Putative sodium channel toxin.</text>
</comment>
<comment type="subcellular location">
    <subcellularLocation>
        <location evidence="5">Secreted</location>
    </subcellularLocation>
</comment>
<comment type="tissue specificity">
    <text evidence="5">Expressed by the venom gland.</text>
</comment>
<comment type="similarity">
    <text evidence="4">Belongs to the long (4 C-C) scorpion toxin superfamily. Sodium channel inhibitor family.</text>
</comment>
<reference evidence="6" key="1">
    <citation type="journal article" date="2021" name="Toxicon">
        <title>Novel components of Tityus serrulatus venom: a transcriptomic approach.</title>
        <authorList>
            <person name="Kalapothakis Y."/>
            <person name="Miranda K."/>
            <person name="Pereira A.H."/>
            <person name="Witt A.S.A."/>
            <person name="Marani C."/>
            <person name="Martins A.P."/>
            <person name="Leal H.G."/>
            <person name="Campos-Junior E."/>
            <person name="Pimenta A.M.C."/>
            <person name="Borges A."/>
            <person name="Chavez-Olortegui C."/>
            <person name="Kalapothakis E."/>
        </authorList>
    </citation>
    <scope>NUCLEOTIDE SEQUENCE [MRNA]</scope>
    <source>
        <tissue>Telson</tissue>
    </source>
</reference>
<dbReference type="EMBL" id="MT081349">
    <property type="protein sequence ID" value="QPD99031.1"/>
    <property type="molecule type" value="mRNA"/>
</dbReference>
<dbReference type="SMR" id="A0A7S8MU78"/>
<dbReference type="GO" id="GO:0005576">
    <property type="term" value="C:extracellular region"/>
    <property type="evidence" value="ECO:0007669"/>
    <property type="project" value="UniProtKB-SubCell"/>
</dbReference>
<dbReference type="GO" id="GO:0017080">
    <property type="term" value="F:sodium channel regulator activity"/>
    <property type="evidence" value="ECO:0007669"/>
    <property type="project" value="UniProtKB-KW"/>
</dbReference>
<dbReference type="GO" id="GO:0090729">
    <property type="term" value="F:toxin activity"/>
    <property type="evidence" value="ECO:0007669"/>
    <property type="project" value="UniProtKB-KW"/>
</dbReference>
<dbReference type="InterPro" id="IPR036574">
    <property type="entry name" value="Scorpion_toxin-like_sf"/>
</dbReference>
<dbReference type="SUPFAM" id="SSF57095">
    <property type="entry name" value="Scorpion toxin-like"/>
    <property type="match status" value="1"/>
</dbReference>
<accession>A0A7S8MU78</accession>
<proteinExistence type="inferred from homology"/>
<keyword id="KW-1015">Disulfide bond</keyword>
<keyword id="KW-0872">Ion channel impairing toxin</keyword>
<keyword id="KW-0528">Neurotoxin</keyword>
<keyword id="KW-0964">Secreted</keyword>
<keyword id="KW-0732">Signal</keyword>
<keyword id="KW-0800">Toxin</keyword>
<keyword id="KW-0738">Voltage-gated sodium channel impairing toxin</keyword>
<feature type="signal peptide" evidence="1">
    <location>
        <begin position="1"/>
        <end position="19"/>
    </location>
</feature>
<feature type="chain" id="PRO_5030722551" description="Putative sodium channel toxin Ts40">
    <location>
        <begin position="20"/>
        <end position="87"/>
    </location>
</feature>
<feature type="disulfide bond" evidence="2">
    <location>
        <begin position="41"/>
        <end position="63"/>
    </location>
</feature>
<feature type="disulfide bond" evidence="2">
    <location>
        <begin position="47"/>
        <end position="68"/>
    </location>
</feature>
<feature type="disulfide bond" evidence="2">
    <location>
        <begin position="51"/>
        <end position="70"/>
    </location>
</feature>
<organism>
    <name type="scientific">Tityus serrulatus</name>
    <name type="common">Brazilian scorpion</name>
    <dbReference type="NCBI Taxonomy" id="6887"/>
    <lineage>
        <taxon>Eukaryota</taxon>
        <taxon>Metazoa</taxon>
        <taxon>Ecdysozoa</taxon>
        <taxon>Arthropoda</taxon>
        <taxon>Chelicerata</taxon>
        <taxon>Arachnida</taxon>
        <taxon>Scorpiones</taxon>
        <taxon>Buthida</taxon>
        <taxon>Buthoidea</taxon>
        <taxon>Buthidae</taxon>
        <taxon>Tityus</taxon>
    </lineage>
</organism>